<sequence>MAINTDTSGKQKALTMVLNQIERSFGKGAIMRLGDATRMRVETISSGALTLDLALGGGLPKGRVIEIYGPESSGKTTVALHALAEVQRNGGIAAFVDAEHALDPTYAAALGVDIDNLLISQPDTGESALEIVDQLVRSAAVDIVVIDSVAALVPRAEIEGDMGDAHVGLQARLMSQALRKITGNIGKSGCTVIFINQLRQKIGVTYGSPETTTGGNALKFYASVRLDIRRIQTLKKGTDEYGNRVKVKVAKNKVAPPFRIAEFDIIFGKGISTLGCVVDLAEETGIIIRKGAWYSYNGDNISQGRDNAIKYLEEKPEFAEEIKKLVREKLDKGAVVSANSVAKASEEDEEEEVDLEPEE</sequence>
<evidence type="ECO:0000255" key="1">
    <source>
        <dbReference type="HAMAP-Rule" id="MF_00268"/>
    </source>
</evidence>
<evidence type="ECO:0000256" key="2">
    <source>
        <dbReference type="SAM" id="MobiDB-lite"/>
    </source>
</evidence>
<accession>B2IWJ2</accession>
<keyword id="KW-0067">ATP-binding</keyword>
<keyword id="KW-0963">Cytoplasm</keyword>
<keyword id="KW-0227">DNA damage</keyword>
<keyword id="KW-0233">DNA recombination</keyword>
<keyword id="KW-0234">DNA repair</keyword>
<keyword id="KW-0238">DNA-binding</keyword>
<keyword id="KW-0547">Nucleotide-binding</keyword>
<keyword id="KW-1185">Reference proteome</keyword>
<keyword id="KW-0742">SOS response</keyword>
<feature type="chain" id="PRO_1000114351" description="Protein RecA">
    <location>
        <begin position="1"/>
        <end position="359"/>
    </location>
</feature>
<feature type="region of interest" description="Disordered" evidence="2">
    <location>
        <begin position="337"/>
        <end position="359"/>
    </location>
</feature>
<feature type="compositionally biased region" description="Acidic residues" evidence="2">
    <location>
        <begin position="346"/>
        <end position="359"/>
    </location>
</feature>
<feature type="binding site" evidence="1">
    <location>
        <begin position="69"/>
        <end position="76"/>
    </location>
    <ligand>
        <name>ATP</name>
        <dbReference type="ChEBI" id="CHEBI:30616"/>
    </ligand>
</feature>
<comment type="function">
    <text evidence="1">Can catalyze the hydrolysis of ATP in the presence of single-stranded DNA, the ATP-dependent uptake of single-stranded DNA by duplex DNA, and the ATP-dependent hybridization of homologous single-stranded DNAs. It interacts with LexA causing its activation and leading to its autocatalytic cleavage.</text>
</comment>
<comment type="subcellular location">
    <subcellularLocation>
        <location evidence="1">Cytoplasm</location>
    </subcellularLocation>
</comment>
<comment type="similarity">
    <text evidence="1">Belongs to the RecA family.</text>
</comment>
<organism>
    <name type="scientific">Nostoc punctiforme (strain ATCC 29133 / PCC 73102)</name>
    <dbReference type="NCBI Taxonomy" id="63737"/>
    <lineage>
        <taxon>Bacteria</taxon>
        <taxon>Bacillati</taxon>
        <taxon>Cyanobacteriota</taxon>
        <taxon>Cyanophyceae</taxon>
        <taxon>Nostocales</taxon>
        <taxon>Nostocaceae</taxon>
        <taxon>Nostoc</taxon>
    </lineage>
</organism>
<gene>
    <name evidence="1" type="primary">recA</name>
    <name type="ordered locus">Npun_F2914</name>
</gene>
<proteinExistence type="inferred from homology"/>
<protein>
    <recommendedName>
        <fullName evidence="1">Protein RecA</fullName>
    </recommendedName>
    <alternativeName>
        <fullName evidence="1">Recombinase A</fullName>
    </alternativeName>
</protein>
<dbReference type="EMBL" id="CP001037">
    <property type="protein sequence ID" value="ACC81446.1"/>
    <property type="molecule type" value="Genomic_DNA"/>
</dbReference>
<dbReference type="RefSeq" id="WP_012409437.1">
    <property type="nucleotide sequence ID" value="NC_010628.1"/>
</dbReference>
<dbReference type="SMR" id="B2IWJ2"/>
<dbReference type="STRING" id="63737.Npun_F2914"/>
<dbReference type="EnsemblBacteria" id="ACC81446">
    <property type="protein sequence ID" value="ACC81446"/>
    <property type="gene ID" value="Npun_F2914"/>
</dbReference>
<dbReference type="KEGG" id="npu:Npun_F2914"/>
<dbReference type="eggNOG" id="COG0468">
    <property type="taxonomic scope" value="Bacteria"/>
</dbReference>
<dbReference type="HOGENOM" id="CLU_040469_3_2_3"/>
<dbReference type="OrthoDB" id="9776733at2"/>
<dbReference type="PhylomeDB" id="B2IWJ2"/>
<dbReference type="Proteomes" id="UP000001191">
    <property type="component" value="Chromosome"/>
</dbReference>
<dbReference type="GO" id="GO:0005829">
    <property type="term" value="C:cytosol"/>
    <property type="evidence" value="ECO:0007669"/>
    <property type="project" value="TreeGrafter"/>
</dbReference>
<dbReference type="GO" id="GO:0005524">
    <property type="term" value="F:ATP binding"/>
    <property type="evidence" value="ECO:0007669"/>
    <property type="project" value="UniProtKB-UniRule"/>
</dbReference>
<dbReference type="GO" id="GO:0016887">
    <property type="term" value="F:ATP hydrolysis activity"/>
    <property type="evidence" value="ECO:0007669"/>
    <property type="project" value="InterPro"/>
</dbReference>
<dbReference type="GO" id="GO:0140664">
    <property type="term" value="F:ATP-dependent DNA damage sensor activity"/>
    <property type="evidence" value="ECO:0007669"/>
    <property type="project" value="InterPro"/>
</dbReference>
<dbReference type="GO" id="GO:0003684">
    <property type="term" value="F:damaged DNA binding"/>
    <property type="evidence" value="ECO:0007669"/>
    <property type="project" value="UniProtKB-UniRule"/>
</dbReference>
<dbReference type="GO" id="GO:0003697">
    <property type="term" value="F:single-stranded DNA binding"/>
    <property type="evidence" value="ECO:0007669"/>
    <property type="project" value="UniProtKB-UniRule"/>
</dbReference>
<dbReference type="GO" id="GO:0006310">
    <property type="term" value="P:DNA recombination"/>
    <property type="evidence" value="ECO:0007669"/>
    <property type="project" value="UniProtKB-UniRule"/>
</dbReference>
<dbReference type="GO" id="GO:0006281">
    <property type="term" value="P:DNA repair"/>
    <property type="evidence" value="ECO:0007669"/>
    <property type="project" value="UniProtKB-UniRule"/>
</dbReference>
<dbReference type="GO" id="GO:0009432">
    <property type="term" value="P:SOS response"/>
    <property type="evidence" value="ECO:0007669"/>
    <property type="project" value="UniProtKB-UniRule"/>
</dbReference>
<dbReference type="CDD" id="cd00983">
    <property type="entry name" value="RecA"/>
    <property type="match status" value="1"/>
</dbReference>
<dbReference type="FunFam" id="3.40.50.300:FF:000087">
    <property type="entry name" value="Recombinase RecA"/>
    <property type="match status" value="1"/>
</dbReference>
<dbReference type="Gene3D" id="3.40.50.300">
    <property type="entry name" value="P-loop containing nucleotide triphosphate hydrolases"/>
    <property type="match status" value="1"/>
</dbReference>
<dbReference type="HAMAP" id="MF_00268">
    <property type="entry name" value="RecA"/>
    <property type="match status" value="1"/>
</dbReference>
<dbReference type="InterPro" id="IPR003593">
    <property type="entry name" value="AAA+_ATPase"/>
</dbReference>
<dbReference type="InterPro" id="IPR013765">
    <property type="entry name" value="DNA_recomb/repair_RecA"/>
</dbReference>
<dbReference type="InterPro" id="IPR020584">
    <property type="entry name" value="DNA_recomb/repair_RecA_CS"/>
</dbReference>
<dbReference type="InterPro" id="IPR027417">
    <property type="entry name" value="P-loop_NTPase"/>
</dbReference>
<dbReference type="InterPro" id="IPR049261">
    <property type="entry name" value="RecA-like_C"/>
</dbReference>
<dbReference type="InterPro" id="IPR049428">
    <property type="entry name" value="RecA-like_N"/>
</dbReference>
<dbReference type="InterPro" id="IPR020588">
    <property type="entry name" value="RecA_ATP-bd"/>
</dbReference>
<dbReference type="InterPro" id="IPR023400">
    <property type="entry name" value="RecA_C_sf"/>
</dbReference>
<dbReference type="InterPro" id="IPR020587">
    <property type="entry name" value="RecA_monomer-monomer_interface"/>
</dbReference>
<dbReference type="NCBIfam" id="TIGR02012">
    <property type="entry name" value="tigrfam_recA"/>
    <property type="match status" value="1"/>
</dbReference>
<dbReference type="PANTHER" id="PTHR45900:SF1">
    <property type="entry name" value="MITOCHONDRIAL DNA REPAIR PROTEIN RECA HOMOLOG-RELATED"/>
    <property type="match status" value="1"/>
</dbReference>
<dbReference type="PANTHER" id="PTHR45900">
    <property type="entry name" value="RECA"/>
    <property type="match status" value="1"/>
</dbReference>
<dbReference type="Pfam" id="PF00154">
    <property type="entry name" value="RecA"/>
    <property type="match status" value="1"/>
</dbReference>
<dbReference type="Pfam" id="PF21096">
    <property type="entry name" value="RecA_C"/>
    <property type="match status" value="1"/>
</dbReference>
<dbReference type="PRINTS" id="PR00142">
    <property type="entry name" value="RECA"/>
</dbReference>
<dbReference type="SMART" id="SM00382">
    <property type="entry name" value="AAA"/>
    <property type="match status" value="1"/>
</dbReference>
<dbReference type="SUPFAM" id="SSF52540">
    <property type="entry name" value="P-loop containing nucleoside triphosphate hydrolases"/>
    <property type="match status" value="1"/>
</dbReference>
<dbReference type="SUPFAM" id="SSF54752">
    <property type="entry name" value="RecA protein, C-terminal domain"/>
    <property type="match status" value="1"/>
</dbReference>
<dbReference type="PROSITE" id="PS00321">
    <property type="entry name" value="RECA_1"/>
    <property type="match status" value="1"/>
</dbReference>
<dbReference type="PROSITE" id="PS50162">
    <property type="entry name" value="RECA_2"/>
    <property type="match status" value="1"/>
</dbReference>
<dbReference type="PROSITE" id="PS50163">
    <property type="entry name" value="RECA_3"/>
    <property type="match status" value="1"/>
</dbReference>
<name>RECA_NOSP7</name>
<reference key="1">
    <citation type="journal article" date="2013" name="Plant Physiol.">
        <title>A Nostoc punctiforme Sugar Transporter Necessary to Establish a Cyanobacterium-Plant Symbiosis.</title>
        <authorList>
            <person name="Ekman M."/>
            <person name="Picossi S."/>
            <person name="Campbell E.L."/>
            <person name="Meeks J.C."/>
            <person name="Flores E."/>
        </authorList>
    </citation>
    <scope>NUCLEOTIDE SEQUENCE [LARGE SCALE GENOMIC DNA]</scope>
    <source>
        <strain>ATCC 29133 / PCC 73102</strain>
    </source>
</reference>